<keyword id="KW-0010">Activator</keyword>
<keyword id="KW-0963">Cytoplasm</keyword>
<keyword id="KW-0238">DNA-binding</keyword>
<keyword id="KW-0597">Phosphoprotein</keyword>
<keyword id="KW-1185">Reference proteome</keyword>
<keyword id="KW-0804">Transcription</keyword>
<keyword id="KW-0805">Transcription regulation</keyword>
<keyword id="KW-0902">Two-component regulatory system</keyword>
<feature type="chain" id="PRO_0000081074" description="Transcriptional regulatory protein CitT">
    <location>
        <begin position="1"/>
        <end position="226"/>
    </location>
</feature>
<feature type="domain" description="Response regulatory" evidence="3">
    <location>
        <begin position="3"/>
        <end position="119"/>
    </location>
</feature>
<feature type="DNA-binding region" description="H-T-H motif" evidence="2">
    <location>
        <begin position="178"/>
        <end position="197"/>
    </location>
</feature>
<feature type="modified residue" description="4-aspartylphosphate" evidence="3">
    <location>
        <position position="54"/>
    </location>
</feature>
<evidence type="ECO:0000250" key="1"/>
<evidence type="ECO:0000255" key="2"/>
<evidence type="ECO:0000255" key="3">
    <source>
        <dbReference type="PROSITE-ProRule" id="PRU00169"/>
    </source>
</evidence>
<evidence type="ECO:0000269" key="4">
    <source>
    </source>
</evidence>
<evidence type="ECO:0000305" key="5"/>
<comment type="function">
    <text evidence="4">Member of the two-component regulatory system CitT/CitS. Regulates the expression of the citM-yflN operon. Phosphorylated CitT binds to the citM promoter to activate the transcription of the citM-yflN operon.</text>
</comment>
<comment type="subcellular location">
    <subcellularLocation>
        <location evidence="5">Cytoplasm</location>
    </subcellularLocation>
</comment>
<comment type="PTM">
    <text evidence="1">Phosphorylated by CitS.</text>
</comment>
<protein>
    <recommendedName>
        <fullName>Transcriptional regulatory protein CitT</fullName>
    </recommendedName>
</protein>
<dbReference type="EMBL" id="D86417">
    <property type="protein sequence ID" value="BAA22310.1"/>
    <property type="molecule type" value="Genomic_DNA"/>
</dbReference>
<dbReference type="EMBL" id="AL009126">
    <property type="protein sequence ID" value="CAB12588.1"/>
    <property type="molecule type" value="Genomic_DNA"/>
</dbReference>
<dbReference type="PIR" id="F69600">
    <property type="entry name" value="F69600"/>
</dbReference>
<dbReference type="RefSeq" id="NP_388640.1">
    <property type="nucleotide sequence ID" value="NC_000964.3"/>
</dbReference>
<dbReference type="RefSeq" id="WP_003242754.1">
    <property type="nucleotide sequence ID" value="NZ_OZ025638.1"/>
</dbReference>
<dbReference type="SMR" id="O34534"/>
<dbReference type="FunCoup" id="O34534">
    <property type="interactions" value="201"/>
</dbReference>
<dbReference type="IntAct" id="O34534">
    <property type="interactions" value="1"/>
</dbReference>
<dbReference type="STRING" id="224308.BSU07590"/>
<dbReference type="PaxDb" id="224308-BSU07590"/>
<dbReference type="EnsemblBacteria" id="CAB12588">
    <property type="protein sequence ID" value="CAB12588"/>
    <property type="gene ID" value="BSU_07590"/>
</dbReference>
<dbReference type="GeneID" id="938806"/>
<dbReference type="KEGG" id="bsu:BSU07590"/>
<dbReference type="PATRIC" id="fig|224308.179.peg.824"/>
<dbReference type="eggNOG" id="COG4565">
    <property type="taxonomic scope" value="Bacteria"/>
</dbReference>
<dbReference type="InParanoid" id="O34534"/>
<dbReference type="OrthoDB" id="9759232at2"/>
<dbReference type="PhylomeDB" id="O34534"/>
<dbReference type="BioCyc" id="BSUB:BSU07590-MONOMER"/>
<dbReference type="Proteomes" id="UP000001570">
    <property type="component" value="Chromosome"/>
</dbReference>
<dbReference type="GO" id="GO:0005737">
    <property type="term" value="C:cytoplasm"/>
    <property type="evidence" value="ECO:0007669"/>
    <property type="project" value="UniProtKB-SubCell"/>
</dbReference>
<dbReference type="GO" id="GO:0003677">
    <property type="term" value="F:DNA binding"/>
    <property type="evidence" value="ECO:0007669"/>
    <property type="project" value="UniProtKB-KW"/>
</dbReference>
<dbReference type="GO" id="GO:0003700">
    <property type="term" value="F:DNA-binding transcription factor activity"/>
    <property type="evidence" value="ECO:0007669"/>
    <property type="project" value="InterPro"/>
</dbReference>
<dbReference type="GO" id="GO:0000156">
    <property type="term" value="F:phosphorelay response regulator activity"/>
    <property type="evidence" value="ECO:0000318"/>
    <property type="project" value="GO_Central"/>
</dbReference>
<dbReference type="CDD" id="cd19925">
    <property type="entry name" value="REC_citrate_TCS"/>
    <property type="match status" value="1"/>
</dbReference>
<dbReference type="FunFam" id="3.40.50.2300:FF:000057">
    <property type="entry name" value="Transcriptional regulatory protein"/>
    <property type="match status" value="1"/>
</dbReference>
<dbReference type="Gene3D" id="3.40.50.2300">
    <property type="match status" value="1"/>
</dbReference>
<dbReference type="InterPro" id="IPR051271">
    <property type="entry name" value="2C-system_Tx_regulators"/>
</dbReference>
<dbReference type="InterPro" id="IPR011006">
    <property type="entry name" value="CheY-like_superfamily"/>
</dbReference>
<dbReference type="InterPro" id="IPR048714">
    <property type="entry name" value="DpiA-like_HTH"/>
</dbReference>
<dbReference type="InterPro" id="IPR024187">
    <property type="entry name" value="Sig_transdc_resp-reg_cit/mal"/>
</dbReference>
<dbReference type="InterPro" id="IPR001789">
    <property type="entry name" value="Sig_transdc_resp-reg_receiver"/>
</dbReference>
<dbReference type="PANTHER" id="PTHR45526:SF6">
    <property type="entry name" value="TRANSCRIPTIONAL REGULATORY PROTEIN CITT"/>
    <property type="match status" value="1"/>
</dbReference>
<dbReference type="PANTHER" id="PTHR45526">
    <property type="entry name" value="TRANSCRIPTIONAL REGULATORY PROTEIN DPIA"/>
    <property type="match status" value="1"/>
</dbReference>
<dbReference type="Pfam" id="PF20714">
    <property type="entry name" value="HTH_64"/>
    <property type="match status" value="1"/>
</dbReference>
<dbReference type="Pfam" id="PF00072">
    <property type="entry name" value="Response_reg"/>
    <property type="match status" value="1"/>
</dbReference>
<dbReference type="PIRSF" id="PIRSF006171">
    <property type="entry name" value="RR_citrat_malat"/>
    <property type="match status" value="1"/>
</dbReference>
<dbReference type="SMART" id="SM00448">
    <property type="entry name" value="REC"/>
    <property type="match status" value="1"/>
</dbReference>
<dbReference type="SUPFAM" id="SSF52172">
    <property type="entry name" value="CheY-like"/>
    <property type="match status" value="1"/>
</dbReference>
<dbReference type="PROSITE" id="PS50110">
    <property type="entry name" value="RESPONSE_REGULATORY"/>
    <property type="match status" value="1"/>
</dbReference>
<proteinExistence type="evidence at protein level"/>
<gene>
    <name type="primary">citT</name>
    <name type="synonym">yflQ</name>
    <name type="ordered locus">BSU07590</name>
</gene>
<sequence>MIHIAIAEDDFRVAQIHERLIKQLDGFKIIGKAANAKETLALLKEHKADLLLLDIYMPDELGTALIPDIRSRFPEVDIMIITAATETRHLQEALRAGIAHYLIKPVTADKFRQVLLQYKEKRKLLMSQPEVSQSMIDHIFGNGVKTALPAEDLPTGINSITLRKIKEALQTASEGLTAEELGEKMGASRTTARRYAEYLVSKEEARAELEYGIIGRPERKYYLAAD</sequence>
<name>CITT_BACSU</name>
<reference key="1">
    <citation type="journal article" date="1997" name="Gene">
        <title>Cloning and sequencing of a 35.7 kb in the 70 degree-73 degree region of the Bacillus subtilis genome reveal genes for a new two-component system, three spore germination proteins, an iron uptake system and a general stress response protein.</title>
        <authorList>
            <person name="Yamamoto H."/>
            <person name="Uchiyama S."/>
            <person name="Nugroho F.A."/>
            <person name="Sekiguchi J."/>
        </authorList>
    </citation>
    <scope>NUCLEOTIDE SEQUENCE [GENOMIC DNA]</scope>
    <source>
        <strain>168 / AC327</strain>
    </source>
</reference>
<reference key="2">
    <citation type="journal article" date="1997" name="Nature">
        <title>The complete genome sequence of the Gram-positive bacterium Bacillus subtilis.</title>
        <authorList>
            <person name="Kunst F."/>
            <person name="Ogasawara N."/>
            <person name="Moszer I."/>
            <person name="Albertini A.M."/>
            <person name="Alloni G."/>
            <person name="Azevedo V."/>
            <person name="Bertero M.G."/>
            <person name="Bessieres P."/>
            <person name="Bolotin A."/>
            <person name="Borchert S."/>
            <person name="Borriss R."/>
            <person name="Boursier L."/>
            <person name="Brans A."/>
            <person name="Braun M."/>
            <person name="Brignell S.C."/>
            <person name="Bron S."/>
            <person name="Brouillet S."/>
            <person name="Bruschi C.V."/>
            <person name="Caldwell B."/>
            <person name="Capuano V."/>
            <person name="Carter N.M."/>
            <person name="Choi S.-K."/>
            <person name="Codani J.-J."/>
            <person name="Connerton I.F."/>
            <person name="Cummings N.J."/>
            <person name="Daniel R.A."/>
            <person name="Denizot F."/>
            <person name="Devine K.M."/>
            <person name="Duesterhoeft A."/>
            <person name="Ehrlich S.D."/>
            <person name="Emmerson P.T."/>
            <person name="Entian K.-D."/>
            <person name="Errington J."/>
            <person name="Fabret C."/>
            <person name="Ferrari E."/>
            <person name="Foulger D."/>
            <person name="Fritz C."/>
            <person name="Fujita M."/>
            <person name="Fujita Y."/>
            <person name="Fuma S."/>
            <person name="Galizzi A."/>
            <person name="Galleron N."/>
            <person name="Ghim S.-Y."/>
            <person name="Glaser P."/>
            <person name="Goffeau A."/>
            <person name="Golightly E.J."/>
            <person name="Grandi G."/>
            <person name="Guiseppi G."/>
            <person name="Guy B.J."/>
            <person name="Haga K."/>
            <person name="Haiech J."/>
            <person name="Harwood C.R."/>
            <person name="Henaut A."/>
            <person name="Hilbert H."/>
            <person name="Holsappel S."/>
            <person name="Hosono S."/>
            <person name="Hullo M.-F."/>
            <person name="Itaya M."/>
            <person name="Jones L.-M."/>
            <person name="Joris B."/>
            <person name="Karamata D."/>
            <person name="Kasahara Y."/>
            <person name="Klaerr-Blanchard M."/>
            <person name="Klein C."/>
            <person name="Kobayashi Y."/>
            <person name="Koetter P."/>
            <person name="Koningstein G."/>
            <person name="Krogh S."/>
            <person name="Kumano M."/>
            <person name="Kurita K."/>
            <person name="Lapidus A."/>
            <person name="Lardinois S."/>
            <person name="Lauber J."/>
            <person name="Lazarevic V."/>
            <person name="Lee S.-M."/>
            <person name="Levine A."/>
            <person name="Liu H."/>
            <person name="Masuda S."/>
            <person name="Mauel C."/>
            <person name="Medigue C."/>
            <person name="Medina N."/>
            <person name="Mellado R.P."/>
            <person name="Mizuno M."/>
            <person name="Moestl D."/>
            <person name="Nakai S."/>
            <person name="Noback M."/>
            <person name="Noone D."/>
            <person name="O'Reilly M."/>
            <person name="Ogawa K."/>
            <person name="Ogiwara A."/>
            <person name="Oudega B."/>
            <person name="Park S.-H."/>
            <person name="Parro V."/>
            <person name="Pohl T.M."/>
            <person name="Portetelle D."/>
            <person name="Porwollik S."/>
            <person name="Prescott A.M."/>
            <person name="Presecan E."/>
            <person name="Pujic P."/>
            <person name="Purnelle B."/>
            <person name="Rapoport G."/>
            <person name="Rey M."/>
            <person name="Reynolds S."/>
            <person name="Rieger M."/>
            <person name="Rivolta C."/>
            <person name="Rocha E."/>
            <person name="Roche B."/>
            <person name="Rose M."/>
            <person name="Sadaie Y."/>
            <person name="Sato T."/>
            <person name="Scanlan E."/>
            <person name="Schleich S."/>
            <person name="Schroeter R."/>
            <person name="Scoffone F."/>
            <person name="Sekiguchi J."/>
            <person name="Sekowska A."/>
            <person name="Seror S.J."/>
            <person name="Serror P."/>
            <person name="Shin B.-S."/>
            <person name="Soldo B."/>
            <person name="Sorokin A."/>
            <person name="Tacconi E."/>
            <person name="Takagi T."/>
            <person name="Takahashi H."/>
            <person name="Takemaru K."/>
            <person name="Takeuchi M."/>
            <person name="Tamakoshi A."/>
            <person name="Tanaka T."/>
            <person name="Terpstra P."/>
            <person name="Tognoni A."/>
            <person name="Tosato V."/>
            <person name="Uchiyama S."/>
            <person name="Vandenbol M."/>
            <person name="Vannier F."/>
            <person name="Vassarotti A."/>
            <person name="Viari A."/>
            <person name="Wambutt R."/>
            <person name="Wedler E."/>
            <person name="Wedler H."/>
            <person name="Weitzenegger T."/>
            <person name="Winters P."/>
            <person name="Wipat A."/>
            <person name="Yamamoto H."/>
            <person name="Yamane K."/>
            <person name="Yasumoto K."/>
            <person name="Yata K."/>
            <person name="Yoshida K."/>
            <person name="Yoshikawa H.-F."/>
            <person name="Zumstein E."/>
            <person name="Yoshikawa H."/>
            <person name="Danchin A."/>
        </authorList>
    </citation>
    <scope>NUCLEOTIDE SEQUENCE [LARGE SCALE GENOMIC DNA]</scope>
    <source>
        <strain>168</strain>
    </source>
</reference>
<reference key="3">
    <citation type="journal article" date="2000" name="Mol. Microbiol.">
        <title>The CitST two-component system regulates the expression of the Mg-citrate transporter in Bacillus subtilis.</title>
        <authorList>
            <person name="Yamamoto H."/>
            <person name="Murata M."/>
            <person name="Sekiguchi J."/>
        </authorList>
    </citation>
    <scope>CHARACTERIZATION</scope>
    <source>
        <strain>168</strain>
    </source>
</reference>
<reference key="4">
    <citation type="journal article" date="2001" name="J. Bacteriol.">
        <title>Comprehensive DNA microarray analysis of Bacillus subtilis two-component regulatory systems.</title>
        <authorList>
            <person name="Kobayashi K."/>
            <person name="Ogura M."/>
            <person name="Yamaguchi H."/>
            <person name="Yoshida K."/>
            <person name="Ogasawara N."/>
            <person name="Tanaka T."/>
            <person name="Fujita Y."/>
        </authorList>
    </citation>
    <scope>FUNCTION</scope>
</reference>
<organism>
    <name type="scientific">Bacillus subtilis (strain 168)</name>
    <dbReference type="NCBI Taxonomy" id="224308"/>
    <lineage>
        <taxon>Bacteria</taxon>
        <taxon>Bacillati</taxon>
        <taxon>Bacillota</taxon>
        <taxon>Bacilli</taxon>
        <taxon>Bacillales</taxon>
        <taxon>Bacillaceae</taxon>
        <taxon>Bacillus</taxon>
    </lineage>
</organism>
<accession>O34534</accession>